<reference key="1">
    <citation type="journal article" date="1997" name="J. Biol. Chem.">
        <title>Analysis of the psbU gene encoding the 12-kDa extrinsic protein of photosystem II and studies on its role by deletion mutagenesis in Synechocystis sp. PCC 6803.</title>
        <authorList>
            <person name="Shen J.-R."/>
            <person name="Ikeuchi M."/>
            <person name="Inoue Y."/>
        </authorList>
    </citation>
    <scope>NUCLEOTIDE SEQUENCE [GENOMIC DNA]</scope>
    <scope>PROTEIN SEQUENCE OF 37-80</scope>
</reference>
<reference key="2">
    <citation type="journal article" date="1996" name="DNA Res.">
        <title>Sequence analysis of the genome of the unicellular cyanobacterium Synechocystis sp. strain PCC6803. II. Sequence determination of the entire genome and assignment of potential protein-coding regions.</title>
        <authorList>
            <person name="Kaneko T."/>
            <person name="Sato S."/>
            <person name="Kotani H."/>
            <person name="Tanaka A."/>
            <person name="Asamizu E."/>
            <person name="Nakamura Y."/>
            <person name="Miyajima N."/>
            <person name="Hirosawa M."/>
            <person name="Sugiura M."/>
            <person name="Sasamoto S."/>
            <person name="Kimura T."/>
            <person name="Hosouchi T."/>
            <person name="Matsuno A."/>
            <person name="Muraki A."/>
            <person name="Nakazaki N."/>
            <person name="Naruo K."/>
            <person name="Okumura S."/>
            <person name="Shimpo S."/>
            <person name="Takeuchi C."/>
            <person name="Wada T."/>
            <person name="Watanabe A."/>
            <person name="Yamada M."/>
            <person name="Yasuda M."/>
            <person name="Tabata S."/>
        </authorList>
    </citation>
    <scope>NUCLEOTIDE SEQUENCE [LARGE SCALE GENOMIC DNA]</scope>
    <source>
        <strain>ATCC 27184 / PCC 6803 / Kazusa</strain>
    </source>
</reference>
<reference key="3">
    <citation type="journal article" date="2002" name="Biochemistry">
        <title>Proteomic analysis of a highly active photosystem II preparation from the cyanobacterium Synechocystis sp. PCC 6803 reveals the presence of novel polypeptides.</title>
        <authorList>
            <person name="Kashino Y."/>
            <person name="Lauber W.M."/>
            <person name="Carroll J.A."/>
            <person name="Wang Q."/>
            <person name="Whitmarsh J."/>
            <person name="Satoh K."/>
            <person name="Pakrasi H.B."/>
        </authorList>
    </citation>
    <scope>PROTEIN SEQUENCE OF 37-52</scope>
    <scope>IDENTIFICATION BY MASS SPECTROMETRY</scope>
    <scope>SUBUNIT</scope>
    <scope>SUBCELLULAR LOCATION</scope>
    <source>
        <strain>ATCC 27184 / PCC 6803 / Kazusa</strain>
    </source>
</reference>
<reference key="4">
    <citation type="journal article" date="2005" name="Biochemistry">
        <title>PsbQ (Sll1638) in Synechocystis sp. PCC 6803 is required for photosystem II activity in specific mutants and in nutrient-limiting conditions.</title>
        <authorList>
            <person name="Summerfield T.C."/>
            <person name="Shand J.A."/>
            <person name="Bentley F.K."/>
            <person name="Eaton-Rye J.J."/>
        </authorList>
    </citation>
    <scope>FUNCTION</scope>
    <scope>DISRUPTION PHENOTYPE</scope>
    <source>
        <strain>ATCC 27184 / PCC 6803 / Kazusa</strain>
    </source>
</reference>
<reference key="5">
    <citation type="journal article" date="2005" name="Biochemistry">
        <title>PsbU provides a stable architecture for the oxygen-evolving system in cyanobacterial photosystem II.</title>
        <authorList>
            <person name="Inoue-Kashino N."/>
            <person name="Kashino Y."/>
            <person name="Satoh K."/>
            <person name="Terashima I."/>
            <person name="Pakrasi H.B."/>
        </authorList>
    </citation>
    <scope>FUNCTION</scope>
    <scope>DISRUPTION PHENOTYPE</scope>
</reference>
<reference evidence="10 11" key="6">
    <citation type="journal article" date="2022" name="Proc. Natl. Acad. Sci. U.S.A.">
        <title>High-resolution cryo-electron microscopy structure of photosystem II from the mesophilic cyanobacterium, Synechocystis sp. PCC 6803.</title>
        <authorList>
            <person name="Gisriel C.J."/>
            <person name="Wang J."/>
            <person name="Liu J."/>
            <person name="Flesher D.A."/>
            <person name="Reiss K.M."/>
            <person name="Huang H.L."/>
            <person name="Yang K.R."/>
            <person name="Armstrong W.H."/>
            <person name="Gunner M.R."/>
            <person name="Batista V.S."/>
            <person name="Debus R.J."/>
            <person name="Brudvig G.W."/>
        </authorList>
    </citation>
    <scope>STRUCTURE BY ELECTRON MICROSCOPY (1.93 ANGSTROMS) OF 37-131</scope>
    <scope>FUNCTION</scope>
    <scope>SUBUNIT</scope>
    <scope>SUBCELLULAR LOCATION</scope>
    <source>
        <strain>ATCC 27184 / PCC 6803 / Kazusa</strain>
    </source>
</reference>
<feature type="signal peptide" evidence="1">
    <location>
        <begin position="1"/>
        <end position="28"/>
    </location>
</feature>
<feature type="propeptide" id="PRO_0000029607" evidence="3 7">
    <location>
        <begin position="29"/>
        <end position="36"/>
    </location>
</feature>
<feature type="chain" id="PRO_0000029608" description="Photosystem II extrinsic protein U">
    <location>
        <begin position="37"/>
        <end position="131"/>
    </location>
</feature>
<feature type="sequence conflict" description="In Ref. 1; BAA12221." evidence="9" ref="1">
    <original>L</original>
    <variation>V</variation>
    <location>
        <position position="13"/>
    </location>
</feature>
<feature type="helix" evidence="12">
    <location>
        <begin position="41"/>
        <end position="46"/>
    </location>
</feature>
<feature type="helix" evidence="12">
    <location>
        <begin position="48"/>
        <end position="50"/>
    </location>
</feature>
<feature type="strand" evidence="12">
    <location>
        <begin position="52"/>
        <end position="54"/>
    </location>
</feature>
<feature type="turn" evidence="12">
    <location>
        <begin position="55"/>
        <end position="57"/>
    </location>
</feature>
<feature type="helix" evidence="12">
    <location>
        <begin position="60"/>
        <end position="63"/>
    </location>
</feature>
<feature type="turn" evidence="12">
    <location>
        <begin position="67"/>
        <end position="71"/>
    </location>
</feature>
<feature type="helix" evidence="12">
    <location>
        <begin position="72"/>
        <end position="79"/>
    </location>
</feature>
<feature type="strand" evidence="12">
    <location>
        <begin position="84"/>
        <end position="86"/>
    </location>
</feature>
<feature type="helix" evidence="12">
    <location>
        <begin position="87"/>
        <end position="91"/>
    </location>
</feature>
<feature type="helix" evidence="12">
    <location>
        <begin position="97"/>
        <end position="106"/>
    </location>
</feature>
<feature type="helix" evidence="12">
    <location>
        <begin position="107"/>
        <end position="109"/>
    </location>
</feature>
<feature type="helix" evidence="12">
    <location>
        <begin position="117"/>
        <end position="120"/>
    </location>
</feature>
<feature type="helix" evidence="12">
    <location>
        <begin position="121"/>
        <end position="123"/>
    </location>
</feature>
<feature type="turn" evidence="12">
    <location>
        <begin position="124"/>
        <end position="126"/>
    </location>
</feature>
<organism>
    <name type="scientific">Synechocystis sp. (strain ATCC 27184 / PCC 6803 / Kazusa)</name>
    <dbReference type="NCBI Taxonomy" id="1111708"/>
    <lineage>
        <taxon>Bacteria</taxon>
        <taxon>Bacillati</taxon>
        <taxon>Cyanobacteriota</taxon>
        <taxon>Cyanophyceae</taxon>
        <taxon>Synechococcales</taxon>
        <taxon>Merismopediaceae</taxon>
        <taxon>Synechocystis</taxon>
    </lineage>
</organism>
<gene>
    <name evidence="2 8" type="primary">psbU</name>
    <name type="ordered locus">sll1194</name>
</gene>
<comment type="function">
    <text evidence="2 4 5 6">One of the extrinsic, lumenal subunits of photosystem II (PSII). PSII is a light-driven water plastoquinone oxidoreductase, using light energy to abstract electrons from H(2)O, generating a proton gradient subsequently used for ATP formation. The extrinsic proteins stabilize the structure of photosystem II oxygen-evolving complex (OEC), the ion environment of oxygen evolution and protect the OEC against heat-induced inactivation. May modulate the Cl(-) requirement for oxygen evolution.</text>
</comment>
<comment type="subunit">
    <text evidence="2 3 6">PSII is composed of 1 copy each of membrane proteins PsbA, PsbB, PsbC, PsbD, PsbE, PsbF, PsbH, PsbI, PsbJ, PsbK, PsbL, PsbM, PsbT, PsbX, PsbY, PsbZ, Psb30/Ycf12, peripheral proteins PsbO, CyanoQ (PsbQ), PsbU, PsbV and a large number of cofactors. It forms dimeric complexes (PubMed:34937700).</text>
</comment>
<comment type="subcellular location">
    <subcellularLocation>
        <location evidence="2 3 6">Cellular thylakoid membrane</location>
        <topology evidence="2 3 6">Peripheral membrane protein</topology>
        <orientation evidence="2 6">Lumenal side</orientation>
    </subcellularLocation>
</comment>
<comment type="disruption phenotype">
    <text evidence="4 5">Decreased growth rate at 30 degrees Celsius with 25 umol photons/m(2)/s, decreased growth in Ca(2+) or Cl(-) depleted medium; further decreased in a double psbU-psbQ mutant.</text>
</comment>
<comment type="similarity">
    <text evidence="2">Belongs to the PsbU family.</text>
</comment>
<dbReference type="EMBL" id="D84098">
    <property type="protein sequence ID" value="BAA12221.1"/>
    <property type="molecule type" value="Genomic_DNA"/>
</dbReference>
<dbReference type="EMBL" id="BA000022">
    <property type="protein sequence ID" value="BAA16847.1"/>
    <property type="molecule type" value="Genomic_DNA"/>
</dbReference>
<dbReference type="PIR" id="S74696">
    <property type="entry name" value="S74696"/>
</dbReference>
<dbReference type="PDB" id="7N8O">
    <property type="method" value="EM"/>
    <property type="resolution" value="1.93 A"/>
    <property type="chains" value="U/u=37-131"/>
</dbReference>
<dbReference type="PDB" id="7RCV">
    <property type="method" value="EM"/>
    <property type="resolution" value="2.01 A"/>
    <property type="chains" value="U/u=37-131"/>
</dbReference>
<dbReference type="PDB" id="8TOW">
    <property type="method" value="EM"/>
    <property type="resolution" value="2.14 A"/>
    <property type="chains" value="U/u=1-131"/>
</dbReference>
<dbReference type="PDB" id="9EH5">
    <property type="method" value="EM"/>
    <property type="resolution" value="1.97 A"/>
    <property type="chains" value="U/u=1-131"/>
</dbReference>
<dbReference type="PDBsum" id="7N8O"/>
<dbReference type="PDBsum" id="7RCV"/>
<dbReference type="PDBsum" id="8TOW"/>
<dbReference type="PDBsum" id="9EH5"/>
<dbReference type="EMDB" id="EMD-24239"/>
<dbReference type="EMDB" id="EMD-24407"/>
<dbReference type="EMDB" id="EMD-41460"/>
<dbReference type="EMDB" id="EMD-48046"/>
<dbReference type="SMR" id="Q55332"/>
<dbReference type="IntAct" id="Q55332">
    <property type="interactions" value="1"/>
</dbReference>
<dbReference type="STRING" id="1148.gene:10497705"/>
<dbReference type="PaxDb" id="1148-1651921"/>
<dbReference type="EnsemblBacteria" id="BAA16847">
    <property type="protein sequence ID" value="BAA16847"/>
    <property type="gene ID" value="BAA16847"/>
</dbReference>
<dbReference type="KEGG" id="syn:sll1194"/>
<dbReference type="eggNOG" id="COG1555">
    <property type="taxonomic scope" value="Bacteria"/>
</dbReference>
<dbReference type="InParanoid" id="Q55332"/>
<dbReference type="PhylomeDB" id="Q55332"/>
<dbReference type="BioCyc" id="MetaCyc:PSBU-MONOMER"/>
<dbReference type="Proteomes" id="UP000001425">
    <property type="component" value="Chromosome"/>
</dbReference>
<dbReference type="GO" id="GO:0019898">
    <property type="term" value="C:extrinsic component of membrane"/>
    <property type="evidence" value="ECO:0007669"/>
    <property type="project" value="InterPro"/>
</dbReference>
<dbReference type="GO" id="GO:0009654">
    <property type="term" value="C:photosystem II oxygen evolving complex"/>
    <property type="evidence" value="ECO:0007669"/>
    <property type="project" value="InterPro"/>
</dbReference>
<dbReference type="GO" id="GO:0031676">
    <property type="term" value="C:plasma membrane-derived thylakoid membrane"/>
    <property type="evidence" value="ECO:0007669"/>
    <property type="project" value="UniProtKB-SubCell"/>
</dbReference>
<dbReference type="GO" id="GO:0030096">
    <property type="term" value="C:plasma membrane-derived thylakoid photosystem II"/>
    <property type="evidence" value="ECO:0000314"/>
    <property type="project" value="UniProtKB"/>
</dbReference>
<dbReference type="GO" id="GO:0015979">
    <property type="term" value="P:photosynthesis"/>
    <property type="evidence" value="ECO:0007669"/>
    <property type="project" value="UniProtKB-UniRule"/>
</dbReference>
<dbReference type="GO" id="GO:0042549">
    <property type="term" value="P:photosystem II stabilization"/>
    <property type="evidence" value="ECO:0007669"/>
    <property type="project" value="InterPro"/>
</dbReference>
<dbReference type="Gene3D" id="1.10.150.320">
    <property type="entry name" value="Photosystem II 12 kDa extrinsic protein"/>
    <property type="match status" value="1"/>
</dbReference>
<dbReference type="HAMAP" id="MF_00589">
    <property type="entry name" value="PSII_PsbU"/>
    <property type="match status" value="1"/>
</dbReference>
<dbReference type="InterPro" id="IPR010527">
    <property type="entry name" value="PSII_PsbU"/>
</dbReference>
<dbReference type="NCBIfam" id="NF002708">
    <property type="entry name" value="PRK02515.1"/>
    <property type="match status" value="1"/>
</dbReference>
<dbReference type="Pfam" id="PF06514">
    <property type="entry name" value="PsbU"/>
    <property type="match status" value="1"/>
</dbReference>
<dbReference type="SUPFAM" id="SSF81585">
    <property type="entry name" value="PsbU/PolX domain-like"/>
    <property type="match status" value="1"/>
</dbReference>
<sequence length="131" mass="14245">MKFISRLLVACSLLIGLMGFLGADLAQALTPNPILAELNAVDAKLTTDFGQKIDLNNSDIRDFRGLRGFYPNLASEIIKNAPYDTVEEVLDIPGLSETQKSRLEANLGSFTVTEPSIELTSGDDRINPGVY</sequence>
<proteinExistence type="evidence at protein level"/>
<evidence type="ECO:0000255" key="1"/>
<evidence type="ECO:0000255" key="2">
    <source>
        <dbReference type="HAMAP-Rule" id="MF_00589"/>
    </source>
</evidence>
<evidence type="ECO:0000269" key="3">
    <source>
    </source>
</evidence>
<evidence type="ECO:0000269" key="4">
    <source>
    </source>
</evidence>
<evidence type="ECO:0000269" key="5">
    <source>
    </source>
</evidence>
<evidence type="ECO:0000269" key="6">
    <source>
    </source>
</evidence>
<evidence type="ECO:0000269" key="7">
    <source>
    </source>
</evidence>
<evidence type="ECO:0000303" key="8">
    <source>
    </source>
</evidence>
<evidence type="ECO:0000305" key="9"/>
<evidence type="ECO:0007744" key="10">
    <source>
        <dbReference type="PDB" id="7N8O"/>
    </source>
</evidence>
<evidence type="ECO:0007744" key="11">
    <source>
        <dbReference type="PDB" id="7RCV"/>
    </source>
</evidence>
<evidence type="ECO:0007829" key="12">
    <source>
        <dbReference type="PDB" id="7N8O"/>
    </source>
</evidence>
<keyword id="KW-0002">3D-structure</keyword>
<keyword id="KW-0903">Direct protein sequencing</keyword>
<keyword id="KW-0249">Electron transport</keyword>
<keyword id="KW-0472">Membrane</keyword>
<keyword id="KW-0602">Photosynthesis</keyword>
<keyword id="KW-0604">Photosystem II</keyword>
<keyword id="KW-1185">Reference proteome</keyword>
<keyword id="KW-0732">Signal</keyword>
<keyword id="KW-0793">Thylakoid</keyword>
<keyword id="KW-0813">Transport</keyword>
<accession>Q55332</accession>
<accession>P72832</accession>
<name>PSBU_SYNY3</name>
<protein>
    <recommendedName>
        <fullName evidence="2">Photosystem II extrinsic protein U</fullName>
        <shortName evidence="2">PSII-U</shortName>
        <shortName evidence="2">PsbU</shortName>
    </recommendedName>
    <alternativeName>
        <fullName evidence="2 8">Photosystem II 12 kDa extrinsic protein</fullName>
        <shortName evidence="2">PS II complex 12 kDa extrinsic protein</shortName>
    </alternativeName>
</protein>